<organism>
    <name type="scientific">Scheffersomyces stipitis (strain ATCC 58785 / CBS 6054 / NBRC 10063 / NRRL Y-11545)</name>
    <name type="common">Yeast</name>
    <name type="synonym">Pichia stipitis</name>
    <dbReference type="NCBI Taxonomy" id="322104"/>
    <lineage>
        <taxon>Eukaryota</taxon>
        <taxon>Fungi</taxon>
        <taxon>Dikarya</taxon>
        <taxon>Ascomycota</taxon>
        <taxon>Saccharomycotina</taxon>
        <taxon>Pichiomycetes</taxon>
        <taxon>Debaryomycetaceae</taxon>
        <taxon>Scheffersomyces</taxon>
    </lineage>
</organism>
<keyword id="KW-0067">ATP-binding</keyword>
<keyword id="KW-0507">mRNA processing</keyword>
<keyword id="KW-0547">Nucleotide-binding</keyword>
<keyword id="KW-0539">Nucleus</keyword>
<keyword id="KW-1185">Reference proteome</keyword>
<dbReference type="EMBL" id="CP000496">
    <property type="protein sequence ID" value="ABN64342.2"/>
    <property type="status" value="ALT_INIT"/>
    <property type="molecule type" value="Genomic_DNA"/>
</dbReference>
<dbReference type="RefSeq" id="XP_001382371.2">
    <property type="nucleotide sequence ID" value="XM_001382334.1"/>
</dbReference>
<dbReference type="SMR" id="A3LNJ3"/>
<dbReference type="FunCoup" id="A3LNJ3">
    <property type="interactions" value="828"/>
</dbReference>
<dbReference type="STRING" id="322104.A3LNJ3"/>
<dbReference type="GeneID" id="4837068"/>
<dbReference type="KEGG" id="pic:PICST_55332"/>
<dbReference type="eggNOG" id="KOG2749">
    <property type="taxonomic scope" value="Eukaryota"/>
</dbReference>
<dbReference type="HOGENOM" id="CLU_018195_3_0_1"/>
<dbReference type="InParanoid" id="A3LNJ3"/>
<dbReference type="OrthoDB" id="258143at2759"/>
<dbReference type="Proteomes" id="UP000002258">
    <property type="component" value="Chromosome 2"/>
</dbReference>
<dbReference type="GO" id="GO:0005849">
    <property type="term" value="C:mRNA cleavage factor complex"/>
    <property type="evidence" value="ECO:0007669"/>
    <property type="project" value="UniProtKB-UniRule"/>
</dbReference>
<dbReference type="GO" id="GO:0005524">
    <property type="term" value="F:ATP binding"/>
    <property type="evidence" value="ECO:0007669"/>
    <property type="project" value="UniProtKB-UniRule"/>
</dbReference>
<dbReference type="GO" id="GO:0051731">
    <property type="term" value="F:polynucleotide 5'-hydroxyl-kinase activity"/>
    <property type="evidence" value="ECO:0007669"/>
    <property type="project" value="InterPro"/>
</dbReference>
<dbReference type="GO" id="GO:0031124">
    <property type="term" value="P:mRNA 3'-end processing"/>
    <property type="evidence" value="ECO:0007669"/>
    <property type="project" value="UniProtKB-UniRule"/>
</dbReference>
<dbReference type="GO" id="GO:0006388">
    <property type="term" value="P:tRNA splicing, via endonucleolytic cleavage and ligation"/>
    <property type="evidence" value="ECO:0007669"/>
    <property type="project" value="TreeGrafter"/>
</dbReference>
<dbReference type="Gene3D" id="2.60.120.1030">
    <property type="entry name" value="Clp1, DNA binding domain"/>
    <property type="match status" value="1"/>
</dbReference>
<dbReference type="Gene3D" id="3.40.50.300">
    <property type="entry name" value="P-loop containing nucleotide triphosphate hydrolases"/>
    <property type="match status" value="1"/>
</dbReference>
<dbReference type="Gene3D" id="2.40.30.330">
    <property type="entry name" value="Pre-mRNA cleavage complex subunit Clp1, C-terminal domain"/>
    <property type="match status" value="1"/>
</dbReference>
<dbReference type="HAMAP" id="MF_03035">
    <property type="entry name" value="Clp1"/>
    <property type="match status" value="1"/>
</dbReference>
<dbReference type="InterPro" id="IPR028606">
    <property type="entry name" value="Clp1"/>
</dbReference>
<dbReference type="InterPro" id="IPR045116">
    <property type="entry name" value="Clp1/Grc3"/>
</dbReference>
<dbReference type="InterPro" id="IPR010655">
    <property type="entry name" value="Clp1_C"/>
</dbReference>
<dbReference type="InterPro" id="IPR038238">
    <property type="entry name" value="Clp1_C_sf"/>
</dbReference>
<dbReference type="InterPro" id="IPR032324">
    <property type="entry name" value="Clp1_N"/>
</dbReference>
<dbReference type="InterPro" id="IPR038239">
    <property type="entry name" value="Clp1_N_sf"/>
</dbReference>
<dbReference type="InterPro" id="IPR032319">
    <property type="entry name" value="CLP1_P"/>
</dbReference>
<dbReference type="InterPro" id="IPR027417">
    <property type="entry name" value="P-loop_NTPase"/>
</dbReference>
<dbReference type="PANTHER" id="PTHR12755">
    <property type="entry name" value="CLEAVAGE/POLYADENYLATION FACTOR IA SUBUNIT CLP1P"/>
    <property type="match status" value="1"/>
</dbReference>
<dbReference type="PANTHER" id="PTHR12755:SF6">
    <property type="entry name" value="POLYRIBONUCLEOTIDE 5'-HYDROXYL-KINASE CLP1"/>
    <property type="match status" value="1"/>
</dbReference>
<dbReference type="Pfam" id="PF06807">
    <property type="entry name" value="Clp1"/>
    <property type="match status" value="1"/>
</dbReference>
<dbReference type="Pfam" id="PF16573">
    <property type="entry name" value="CLP1_N"/>
    <property type="match status" value="1"/>
</dbReference>
<dbReference type="Pfam" id="PF16575">
    <property type="entry name" value="CLP1_P"/>
    <property type="match status" value="1"/>
</dbReference>
<dbReference type="SUPFAM" id="SSF52540">
    <property type="entry name" value="P-loop containing nucleoside triphosphate hydrolases"/>
    <property type="match status" value="1"/>
</dbReference>
<feature type="chain" id="PRO_0000375215" description="mRNA cleavage and polyadenylation factor CLP1">
    <location>
        <begin position="1"/>
        <end position="453"/>
    </location>
</feature>
<feature type="binding site" evidence="1">
    <location>
        <position position="31"/>
    </location>
    <ligand>
        <name>ATP</name>
        <dbReference type="ChEBI" id="CHEBI:30616"/>
    </ligand>
</feature>
<feature type="binding site" evidence="1">
    <location>
        <position position="70"/>
    </location>
    <ligand>
        <name>ATP</name>
        <dbReference type="ChEBI" id="CHEBI:30616"/>
    </ligand>
</feature>
<feature type="binding site" evidence="1">
    <location>
        <begin position="146"/>
        <end position="151"/>
    </location>
    <ligand>
        <name>ATP</name>
        <dbReference type="ChEBI" id="CHEBI:30616"/>
    </ligand>
</feature>
<sequence length="453" mass="49783">MSIPGFGAEAQVYSETGSKGLVEVAIPEGSEWRIEVPHKTILKFKVTEGVAEIFGTELPINVELQISGTKTMVYAPIIYETFKNKTVMSNESEEIVEYLSNDSVMANYINLHLVVEAMRQQVSDNNILNPTELQSGPRVLIVGNGNSGKTSLAKLLSAYAIKSDSTPVLVNLNPRDGVFSLPGSLTATPISDSLDVESANGWGFTTTSGSLFHNPKQPIVKNYGFVDVNENLDLYKYQVSKLGVTVLSRLEEDIACRNGGVIIDTPALGIKDFTVIENIVSDFEVNLIVVLGNERLMIDLKKRFKHKSALQIVKVPKSEGLVEVDEAFIRRTQEESIKEYFNGNYKTRLSPFKTDIDVNDHTIYKCVLSSDVNSALSFLPAEPSSSNLDNSILAITQLPSTHKSGRELLNTSILGYVHVSKFDDAKGKIKVLLPFPGGFPRNMLISTNIGFNE</sequence>
<name>CLP1_PICST</name>
<proteinExistence type="inferred from homology"/>
<gene>
    <name evidence="1" type="primary">CLP1</name>
    <name type="ORF">PICST_55332</name>
</gene>
<accession>A3LNJ3</accession>
<evidence type="ECO:0000255" key="1">
    <source>
        <dbReference type="HAMAP-Rule" id="MF_03035"/>
    </source>
</evidence>
<evidence type="ECO:0000305" key="2"/>
<protein>
    <recommendedName>
        <fullName evidence="1">mRNA cleavage and polyadenylation factor CLP1</fullName>
    </recommendedName>
</protein>
<reference key="1">
    <citation type="journal article" date="2007" name="Nat. Biotechnol.">
        <title>Genome sequence of the lignocellulose-bioconverting and xylose-fermenting yeast Pichia stipitis.</title>
        <authorList>
            <person name="Jeffries T.W."/>
            <person name="Grigoriev I.V."/>
            <person name="Grimwood J."/>
            <person name="Laplaza J.M."/>
            <person name="Aerts A."/>
            <person name="Salamov A."/>
            <person name="Schmutz J."/>
            <person name="Lindquist E."/>
            <person name="Dehal P."/>
            <person name="Shapiro H."/>
            <person name="Jin Y.-S."/>
            <person name="Passoth V."/>
            <person name="Richardson P.M."/>
        </authorList>
    </citation>
    <scope>NUCLEOTIDE SEQUENCE [LARGE SCALE GENOMIC DNA]</scope>
    <source>
        <strain>ATCC 58785 / CBS 6054 / NBRC 10063 / NRRL Y-11545</strain>
    </source>
</reference>
<comment type="function">
    <text evidence="1">Required for endonucleolytic cleavage during polyadenylation-dependent pre-mRNA 3'-end formation.</text>
</comment>
<comment type="subunit">
    <text evidence="1">Component of a pre-mRNA cleavage factor complex. Interacts directly with PCF11.</text>
</comment>
<comment type="subcellular location">
    <subcellularLocation>
        <location evidence="1">Nucleus</location>
    </subcellularLocation>
</comment>
<comment type="similarity">
    <text evidence="1">Belongs to the Clp1 family. Clp1 subfamily.</text>
</comment>
<comment type="caution">
    <text evidence="2">May lack the polyribonucleotide 5'-hydroxyl-kinase and polynucleotide 5'-hydroxyl-kinase activities that are characteristic of the human ortholog.</text>
</comment>
<comment type="sequence caution" evidence="2">
    <conflict type="erroneous initiation">
        <sequence resource="EMBL-CDS" id="ABN64342"/>
    </conflict>
</comment>